<protein>
    <recommendedName>
        <fullName evidence="1">SsrA-binding protein</fullName>
    </recommendedName>
    <alternativeName>
        <fullName evidence="1">Small protein B</fullName>
    </alternativeName>
</protein>
<evidence type="ECO:0000255" key="1">
    <source>
        <dbReference type="HAMAP-Rule" id="MF_00023"/>
    </source>
</evidence>
<keyword id="KW-0963">Cytoplasm</keyword>
<keyword id="KW-0694">RNA-binding</keyword>
<sequence length="164" mass="19005">MAKKKKKVDENNSVLATNRKARHDYHIIDTWEAGVVLLGTEIKSLREGKVSLVDSFATIDNGEIWLQHLHIPQYSMGSWTNHTPKRTRKLLLHRNEIDSLMGKVRDGNRTLVPLKLYLKNGRVKLELGLAQGKQDYDKRQDIKRRTEEREVTRELGRRIKGINA</sequence>
<accession>A4QCD6</accession>
<proteinExistence type="inferred from homology"/>
<feature type="chain" id="PRO_1000002041" description="SsrA-binding protein">
    <location>
        <begin position="1"/>
        <end position="164"/>
    </location>
</feature>
<dbReference type="EMBL" id="AP009044">
    <property type="protein sequence ID" value="BAF53883.1"/>
    <property type="molecule type" value="Genomic_DNA"/>
</dbReference>
<dbReference type="RefSeq" id="WP_003858084.1">
    <property type="nucleotide sequence ID" value="NC_009342.1"/>
</dbReference>
<dbReference type="SMR" id="A4QCD6"/>
<dbReference type="GeneID" id="1018799"/>
<dbReference type="KEGG" id="cgt:cgR_0909"/>
<dbReference type="HOGENOM" id="CLU_108953_2_1_11"/>
<dbReference type="PhylomeDB" id="A4QCD6"/>
<dbReference type="Proteomes" id="UP000006698">
    <property type="component" value="Chromosome"/>
</dbReference>
<dbReference type="GO" id="GO:0005829">
    <property type="term" value="C:cytosol"/>
    <property type="evidence" value="ECO:0007669"/>
    <property type="project" value="TreeGrafter"/>
</dbReference>
<dbReference type="GO" id="GO:0003723">
    <property type="term" value="F:RNA binding"/>
    <property type="evidence" value="ECO:0007669"/>
    <property type="project" value="UniProtKB-UniRule"/>
</dbReference>
<dbReference type="GO" id="GO:0070929">
    <property type="term" value="P:trans-translation"/>
    <property type="evidence" value="ECO:0007669"/>
    <property type="project" value="UniProtKB-UniRule"/>
</dbReference>
<dbReference type="CDD" id="cd09294">
    <property type="entry name" value="SmpB"/>
    <property type="match status" value="1"/>
</dbReference>
<dbReference type="Gene3D" id="2.40.280.10">
    <property type="match status" value="1"/>
</dbReference>
<dbReference type="HAMAP" id="MF_00023">
    <property type="entry name" value="SmpB"/>
    <property type="match status" value="1"/>
</dbReference>
<dbReference type="InterPro" id="IPR023620">
    <property type="entry name" value="SmpB"/>
</dbReference>
<dbReference type="InterPro" id="IPR000037">
    <property type="entry name" value="SsrA-bd_prot"/>
</dbReference>
<dbReference type="InterPro" id="IPR020081">
    <property type="entry name" value="SsrA-bd_prot_CS"/>
</dbReference>
<dbReference type="NCBIfam" id="NF003843">
    <property type="entry name" value="PRK05422.1"/>
    <property type="match status" value="1"/>
</dbReference>
<dbReference type="NCBIfam" id="TIGR00086">
    <property type="entry name" value="smpB"/>
    <property type="match status" value="1"/>
</dbReference>
<dbReference type="PANTHER" id="PTHR30308:SF2">
    <property type="entry name" value="SSRA-BINDING PROTEIN"/>
    <property type="match status" value="1"/>
</dbReference>
<dbReference type="PANTHER" id="PTHR30308">
    <property type="entry name" value="TMRNA-BINDING COMPONENT OF TRANS-TRANSLATION TAGGING COMPLEX"/>
    <property type="match status" value="1"/>
</dbReference>
<dbReference type="Pfam" id="PF01668">
    <property type="entry name" value="SmpB"/>
    <property type="match status" value="1"/>
</dbReference>
<dbReference type="SUPFAM" id="SSF74982">
    <property type="entry name" value="Small protein B (SmpB)"/>
    <property type="match status" value="1"/>
</dbReference>
<dbReference type="PROSITE" id="PS01317">
    <property type="entry name" value="SSRP"/>
    <property type="match status" value="1"/>
</dbReference>
<organism>
    <name type="scientific">Corynebacterium glutamicum (strain R)</name>
    <dbReference type="NCBI Taxonomy" id="340322"/>
    <lineage>
        <taxon>Bacteria</taxon>
        <taxon>Bacillati</taxon>
        <taxon>Actinomycetota</taxon>
        <taxon>Actinomycetes</taxon>
        <taxon>Mycobacteriales</taxon>
        <taxon>Corynebacteriaceae</taxon>
        <taxon>Corynebacterium</taxon>
    </lineage>
</organism>
<name>SSRP_CORGB</name>
<comment type="function">
    <text evidence="1">Required for rescue of stalled ribosomes mediated by trans-translation. Binds to transfer-messenger RNA (tmRNA), required for stable association of tmRNA with ribosomes. tmRNA and SmpB together mimic tRNA shape, replacing the anticodon stem-loop with SmpB. tmRNA is encoded by the ssrA gene; the 2 termini fold to resemble tRNA(Ala) and it encodes a 'tag peptide', a short internal open reading frame. During trans-translation Ala-aminoacylated tmRNA acts like a tRNA, entering the A-site of stalled ribosomes, displacing the stalled mRNA. The ribosome then switches to translate the ORF on the tmRNA; the nascent peptide is terminated with the 'tag peptide' encoded by the tmRNA and targeted for degradation. The ribosome is freed to recommence translation, which seems to be the essential function of trans-translation.</text>
</comment>
<comment type="subcellular location">
    <subcellularLocation>
        <location evidence="1">Cytoplasm</location>
    </subcellularLocation>
    <text evidence="1">The tmRNA-SmpB complex associates with stalled 70S ribosomes.</text>
</comment>
<comment type="similarity">
    <text evidence="1">Belongs to the SmpB family.</text>
</comment>
<gene>
    <name evidence="1" type="primary">smpB</name>
    <name type="ordered locus">cgR_0909</name>
</gene>
<reference key="1">
    <citation type="journal article" date="2007" name="Microbiology">
        <title>Comparative analysis of the Corynebacterium glutamicum group and complete genome sequence of strain R.</title>
        <authorList>
            <person name="Yukawa H."/>
            <person name="Omumasaba C.A."/>
            <person name="Nonaka H."/>
            <person name="Kos P."/>
            <person name="Okai N."/>
            <person name="Suzuki N."/>
            <person name="Suda M."/>
            <person name="Tsuge Y."/>
            <person name="Watanabe J."/>
            <person name="Ikeda Y."/>
            <person name="Vertes A.A."/>
            <person name="Inui M."/>
        </authorList>
    </citation>
    <scope>NUCLEOTIDE SEQUENCE [LARGE SCALE GENOMIC DNA]</scope>
    <source>
        <strain>R</strain>
    </source>
</reference>